<keyword id="KW-0687">Ribonucleoprotein</keyword>
<keyword id="KW-0689">Ribosomal protein</keyword>
<keyword id="KW-0694">RNA-binding</keyword>
<keyword id="KW-0699">rRNA-binding</keyword>
<feature type="chain" id="PRO_1000086622" description="Large ribosomal subunit protein bL25">
    <location>
        <begin position="1"/>
        <end position="244"/>
    </location>
</feature>
<feature type="region of interest" description="Disordered" evidence="2">
    <location>
        <begin position="197"/>
        <end position="244"/>
    </location>
</feature>
<feature type="compositionally biased region" description="Low complexity" evidence="2">
    <location>
        <begin position="204"/>
        <end position="215"/>
    </location>
</feature>
<sequence length="244" mass="26539">MAAESFELIAELREFTGKSAARRMRRFEDKVPGTVYGAGKAPQSITLLQKDLLKALESESTFSSILTLKVGDKKQKVILKALQRHHTKPKIVHIDFQRIKASEKLIMNVPLHFLGEDDCPGVEAGGVVSHLQSEVEIRCLPADLPEYIEVDLSHLQLDESVHLSNLKLPAGVGLTSAVDEEHDSPIASVHMPRVSKADVEAEAAEAALAKEAATEAAEEEETEKPASEAEASGEAEQADTDKKE</sequence>
<proteinExistence type="inferred from homology"/>
<reference key="1">
    <citation type="journal article" date="2009" name="Infect. Immun.">
        <title>Comparative genomics reveal extensive transposon-mediated genomic plasticity and diversity among potential effector proteins within the genus Coxiella.</title>
        <authorList>
            <person name="Beare P.A."/>
            <person name="Unsworth N."/>
            <person name="Andoh M."/>
            <person name="Voth D.E."/>
            <person name="Omsland A."/>
            <person name="Gilk S.D."/>
            <person name="Williams K.P."/>
            <person name="Sobral B.W."/>
            <person name="Kupko J.J. III"/>
            <person name="Porcella S.F."/>
            <person name="Samuel J.E."/>
            <person name="Heinzen R.A."/>
        </authorList>
    </citation>
    <scope>NUCLEOTIDE SEQUENCE [LARGE SCALE GENOMIC DNA]</scope>
    <source>
        <strain>Dugway 5J108-111</strain>
    </source>
</reference>
<gene>
    <name evidence="1" type="primary">rplY</name>
    <name evidence="1" type="synonym">ctc</name>
    <name type="ordered locus">CBUD_0070</name>
</gene>
<accession>A9KF12</accession>
<name>RL25_COXBN</name>
<comment type="function">
    <text evidence="1">This is one of the proteins that binds to the 5S RNA in the ribosome where it forms part of the central protuberance.</text>
</comment>
<comment type="subunit">
    <text evidence="1">Part of the 50S ribosomal subunit; part of the 5S rRNA/L5/L18/L25 subcomplex. Contacts the 5S rRNA. Binds to the 5S rRNA independently of L5 and L18.</text>
</comment>
<comment type="similarity">
    <text evidence="1">Belongs to the bacterial ribosomal protein bL25 family. CTC subfamily.</text>
</comment>
<organism>
    <name type="scientific">Coxiella burnetii (strain Dugway 5J108-111)</name>
    <dbReference type="NCBI Taxonomy" id="434922"/>
    <lineage>
        <taxon>Bacteria</taxon>
        <taxon>Pseudomonadati</taxon>
        <taxon>Pseudomonadota</taxon>
        <taxon>Gammaproteobacteria</taxon>
        <taxon>Legionellales</taxon>
        <taxon>Coxiellaceae</taxon>
        <taxon>Coxiella</taxon>
    </lineage>
</organism>
<protein>
    <recommendedName>
        <fullName evidence="1">Large ribosomal subunit protein bL25</fullName>
    </recommendedName>
    <alternativeName>
        <fullName evidence="3">50S ribosomal protein L25</fullName>
    </alternativeName>
    <alternativeName>
        <fullName evidence="1">General stress protein CTC</fullName>
    </alternativeName>
</protein>
<dbReference type="EMBL" id="CP000733">
    <property type="protein sequence ID" value="ABS76499.1"/>
    <property type="molecule type" value="Genomic_DNA"/>
</dbReference>
<dbReference type="RefSeq" id="WP_005770208.1">
    <property type="nucleotide sequence ID" value="NC_009727.1"/>
</dbReference>
<dbReference type="SMR" id="A9KF12"/>
<dbReference type="KEGG" id="cbd:CBUD_0070"/>
<dbReference type="HOGENOM" id="CLU_075939_0_1_6"/>
<dbReference type="Proteomes" id="UP000008555">
    <property type="component" value="Chromosome"/>
</dbReference>
<dbReference type="GO" id="GO:0022625">
    <property type="term" value="C:cytosolic large ribosomal subunit"/>
    <property type="evidence" value="ECO:0007669"/>
    <property type="project" value="TreeGrafter"/>
</dbReference>
<dbReference type="GO" id="GO:0008097">
    <property type="term" value="F:5S rRNA binding"/>
    <property type="evidence" value="ECO:0007669"/>
    <property type="project" value="InterPro"/>
</dbReference>
<dbReference type="GO" id="GO:0003735">
    <property type="term" value="F:structural constituent of ribosome"/>
    <property type="evidence" value="ECO:0007669"/>
    <property type="project" value="InterPro"/>
</dbReference>
<dbReference type="GO" id="GO:0006412">
    <property type="term" value="P:translation"/>
    <property type="evidence" value="ECO:0007669"/>
    <property type="project" value="UniProtKB-UniRule"/>
</dbReference>
<dbReference type="CDD" id="cd00495">
    <property type="entry name" value="Ribosomal_L25_TL5_CTC"/>
    <property type="match status" value="1"/>
</dbReference>
<dbReference type="FunFam" id="2.170.120.20:FF:000003">
    <property type="entry name" value="50S ribosomal protein L25"/>
    <property type="match status" value="1"/>
</dbReference>
<dbReference type="Gene3D" id="2.170.120.20">
    <property type="entry name" value="Ribosomal protein L25, beta domain"/>
    <property type="match status" value="1"/>
</dbReference>
<dbReference type="Gene3D" id="2.40.240.10">
    <property type="entry name" value="Ribosomal Protein L25, Chain P"/>
    <property type="match status" value="1"/>
</dbReference>
<dbReference type="HAMAP" id="MF_01334">
    <property type="entry name" value="Ribosomal_bL25_CTC"/>
    <property type="match status" value="1"/>
</dbReference>
<dbReference type="InterPro" id="IPR020056">
    <property type="entry name" value="Rbsml_bL25/Gln-tRNA_synth_N"/>
</dbReference>
<dbReference type="InterPro" id="IPR011035">
    <property type="entry name" value="Ribosomal_bL25/Gln-tRNA_synth"/>
</dbReference>
<dbReference type="InterPro" id="IPR020057">
    <property type="entry name" value="Ribosomal_bL25_b-dom"/>
</dbReference>
<dbReference type="InterPro" id="IPR037121">
    <property type="entry name" value="Ribosomal_bL25_C"/>
</dbReference>
<dbReference type="InterPro" id="IPR001021">
    <property type="entry name" value="Ribosomal_bL25_long"/>
</dbReference>
<dbReference type="InterPro" id="IPR029751">
    <property type="entry name" value="Ribosomal_L25_dom"/>
</dbReference>
<dbReference type="InterPro" id="IPR020930">
    <property type="entry name" value="Ribosomal_uL5_bac-type"/>
</dbReference>
<dbReference type="NCBIfam" id="TIGR00731">
    <property type="entry name" value="bL25_bact_ctc"/>
    <property type="match status" value="1"/>
</dbReference>
<dbReference type="NCBIfam" id="NF004128">
    <property type="entry name" value="PRK05618.1-2"/>
    <property type="match status" value="1"/>
</dbReference>
<dbReference type="NCBIfam" id="NF004130">
    <property type="entry name" value="PRK05618.1-5"/>
    <property type="match status" value="1"/>
</dbReference>
<dbReference type="NCBIfam" id="NF004612">
    <property type="entry name" value="PRK05943.1"/>
    <property type="match status" value="1"/>
</dbReference>
<dbReference type="PANTHER" id="PTHR33284">
    <property type="entry name" value="RIBOSOMAL PROTEIN L25/GLN-TRNA SYNTHETASE, ANTI-CODON-BINDING DOMAIN-CONTAINING PROTEIN"/>
    <property type="match status" value="1"/>
</dbReference>
<dbReference type="PANTHER" id="PTHR33284:SF1">
    <property type="entry name" value="RIBOSOMAL PROTEIN L25_GLN-TRNA SYNTHETASE, ANTI-CODON-BINDING DOMAIN-CONTAINING PROTEIN"/>
    <property type="match status" value="1"/>
</dbReference>
<dbReference type="Pfam" id="PF01386">
    <property type="entry name" value="Ribosomal_L25p"/>
    <property type="match status" value="1"/>
</dbReference>
<dbReference type="Pfam" id="PF14693">
    <property type="entry name" value="Ribosomal_TL5_C"/>
    <property type="match status" value="1"/>
</dbReference>
<dbReference type="SUPFAM" id="SSF50715">
    <property type="entry name" value="Ribosomal protein L25-like"/>
    <property type="match status" value="1"/>
</dbReference>
<evidence type="ECO:0000255" key="1">
    <source>
        <dbReference type="HAMAP-Rule" id="MF_01334"/>
    </source>
</evidence>
<evidence type="ECO:0000256" key="2">
    <source>
        <dbReference type="SAM" id="MobiDB-lite"/>
    </source>
</evidence>
<evidence type="ECO:0000305" key="3"/>